<comment type="function">
    <text evidence="1">Catalyzes the ATP- as well as the pyrophosphate-dependent phosphorylation of a specific serine residue in HPr, a phosphocarrier protein of the phosphoenolpyruvate-dependent sugar phosphotransferase system (PTS). HprK/P also catalyzes the pyrophosphate-producing, inorganic phosphate-dependent dephosphorylation (phosphorolysis) of seryl-phosphorylated HPr (P-Ser-HPr). The two antagonistic activities of HprK/P are regulated by several intracellular metabolites, which change their concentration in response to the absence or presence of rapidly metabolisable carbon sources (glucose, fructose, etc.) in the growth medium. Therefore, by controlling the phosphorylation state of HPr, HPrK/P is a sensor enzyme that plays a major role in the regulation of carbon metabolism and sugar transport: it mediates carbon catabolite repression (CCR), and regulates PTS-catalyzed carbohydrate uptake and inducer exclusion.</text>
</comment>
<comment type="catalytic activity">
    <reaction evidence="1">
        <text>[HPr protein]-L-serine + ATP = [HPr protein]-O-phospho-L-serine + ADP + H(+)</text>
        <dbReference type="Rhea" id="RHEA:46600"/>
        <dbReference type="Rhea" id="RHEA-COMP:11602"/>
        <dbReference type="Rhea" id="RHEA-COMP:11603"/>
        <dbReference type="ChEBI" id="CHEBI:15378"/>
        <dbReference type="ChEBI" id="CHEBI:29999"/>
        <dbReference type="ChEBI" id="CHEBI:30616"/>
        <dbReference type="ChEBI" id="CHEBI:83421"/>
        <dbReference type="ChEBI" id="CHEBI:456216"/>
    </reaction>
</comment>
<comment type="catalytic activity">
    <reaction evidence="1">
        <text>[HPr protein]-O-phospho-L-serine + phosphate + H(+) = [HPr protein]-L-serine + diphosphate</text>
        <dbReference type="Rhea" id="RHEA:46604"/>
        <dbReference type="Rhea" id="RHEA-COMP:11602"/>
        <dbReference type="Rhea" id="RHEA-COMP:11603"/>
        <dbReference type="ChEBI" id="CHEBI:15378"/>
        <dbReference type="ChEBI" id="CHEBI:29999"/>
        <dbReference type="ChEBI" id="CHEBI:33019"/>
        <dbReference type="ChEBI" id="CHEBI:43474"/>
        <dbReference type="ChEBI" id="CHEBI:83421"/>
    </reaction>
</comment>
<comment type="cofactor">
    <cofactor evidence="1">
        <name>Mg(2+)</name>
        <dbReference type="ChEBI" id="CHEBI:18420"/>
    </cofactor>
</comment>
<comment type="subunit">
    <text evidence="1">Homohexamer.</text>
</comment>
<comment type="domain">
    <text evidence="1">The Walker A ATP-binding motif also binds Pi and PPi.</text>
</comment>
<comment type="miscellaneous">
    <text evidence="1">Both phosphorylation and phosphorolysis are carried out by the same active site and suggest a common mechanism for both reactions.</text>
</comment>
<comment type="similarity">
    <text evidence="1">Belongs to the HPrK/P family.</text>
</comment>
<keyword id="KW-0067">ATP-binding</keyword>
<keyword id="KW-0119">Carbohydrate metabolism</keyword>
<keyword id="KW-0418">Kinase</keyword>
<keyword id="KW-0460">Magnesium</keyword>
<keyword id="KW-0479">Metal-binding</keyword>
<keyword id="KW-0511">Multifunctional enzyme</keyword>
<keyword id="KW-0547">Nucleotide-binding</keyword>
<keyword id="KW-0723">Serine/threonine-protein kinase</keyword>
<keyword id="KW-0808">Transferase</keyword>
<protein>
    <recommendedName>
        <fullName evidence="1">HPr kinase/phosphorylase</fullName>
        <shortName evidence="1">HPrK/P</shortName>
        <ecNumber evidence="1">2.7.11.-</ecNumber>
        <ecNumber evidence="1">2.7.4.-</ecNumber>
    </recommendedName>
    <alternativeName>
        <fullName evidence="1">HPr(Ser) kinase/phosphorylase</fullName>
    </alternativeName>
</protein>
<name>HPRK_STRPI</name>
<accession>B1ICL3</accession>
<feature type="chain" id="PRO_1000139914" description="HPr kinase/phosphorylase">
    <location>
        <begin position="1"/>
        <end position="311"/>
    </location>
</feature>
<feature type="region of interest" description="Important for the catalytic mechanism of both phosphorylation and dephosphorylation" evidence="1">
    <location>
        <begin position="201"/>
        <end position="210"/>
    </location>
</feature>
<feature type="region of interest" description="Important for the catalytic mechanism of dephosphorylation" evidence="1">
    <location>
        <begin position="264"/>
        <end position="269"/>
    </location>
</feature>
<feature type="active site" evidence="1">
    <location>
        <position position="138"/>
    </location>
</feature>
<feature type="active site" evidence="1">
    <location>
        <position position="159"/>
    </location>
</feature>
<feature type="active site" description="Proton acceptor; for phosphorylation activity. Proton donor; for dephosphorylation activity" evidence="1">
    <location>
        <position position="177"/>
    </location>
</feature>
<feature type="active site" evidence="1">
    <location>
        <position position="243"/>
    </location>
</feature>
<feature type="binding site" evidence="1">
    <location>
        <begin position="153"/>
        <end position="160"/>
    </location>
    <ligand>
        <name>ATP</name>
        <dbReference type="ChEBI" id="CHEBI:30616"/>
    </ligand>
</feature>
<feature type="binding site" evidence="1">
    <location>
        <position position="160"/>
    </location>
    <ligand>
        <name>Mg(2+)</name>
        <dbReference type="ChEBI" id="CHEBI:18420"/>
    </ligand>
</feature>
<feature type="binding site" evidence="1">
    <location>
        <position position="202"/>
    </location>
    <ligand>
        <name>Mg(2+)</name>
        <dbReference type="ChEBI" id="CHEBI:18420"/>
    </ligand>
</feature>
<sequence>MSVLVKEVIEKLRLDIVYGEPELLEKEINIADITRPGLEMTGYFDYYTPERIQLLGMKEWSYLISMPSNSRYEVLKKMFLPETPAVIVARGLVVPEEMLKAARECKIAILTSRAATSRLSGELSSYLDSRLAERTSVHGVLMDIYGMGVLIQGDSGIGKSETGLELVKRGHRLVADDRVDIFAKDEITLWGEPAEILKHLIEIRGVGIIDVMSLYGASAVKDSSQVQLAVYLENYDTHKTFDRLGNNAEELEVSGVAIPRIRIPVKTGRNISVVIEAAAMNYRAKEMGFDATRLFDERLTSLIARNEVQNA</sequence>
<dbReference type="EC" id="2.7.11.-" evidence="1"/>
<dbReference type="EC" id="2.7.4.-" evidence="1"/>
<dbReference type="EMBL" id="CP000936">
    <property type="protein sequence ID" value="ACA35690.1"/>
    <property type="molecule type" value="Genomic_DNA"/>
</dbReference>
<dbReference type="RefSeq" id="WP_000115140.1">
    <property type="nucleotide sequence ID" value="NC_010380.1"/>
</dbReference>
<dbReference type="SMR" id="B1ICL3"/>
<dbReference type="GeneID" id="45653329"/>
<dbReference type="KEGG" id="spv:SPH_1544"/>
<dbReference type="HOGENOM" id="CLU_052030_0_1_9"/>
<dbReference type="Proteomes" id="UP000002163">
    <property type="component" value="Chromosome"/>
</dbReference>
<dbReference type="GO" id="GO:0005524">
    <property type="term" value="F:ATP binding"/>
    <property type="evidence" value="ECO:0007669"/>
    <property type="project" value="UniProtKB-UniRule"/>
</dbReference>
<dbReference type="GO" id="GO:0000287">
    <property type="term" value="F:magnesium ion binding"/>
    <property type="evidence" value="ECO:0007669"/>
    <property type="project" value="UniProtKB-UniRule"/>
</dbReference>
<dbReference type="GO" id="GO:0000155">
    <property type="term" value="F:phosphorelay sensor kinase activity"/>
    <property type="evidence" value="ECO:0007669"/>
    <property type="project" value="InterPro"/>
</dbReference>
<dbReference type="GO" id="GO:0004674">
    <property type="term" value="F:protein serine/threonine kinase activity"/>
    <property type="evidence" value="ECO:0007669"/>
    <property type="project" value="UniProtKB-KW"/>
</dbReference>
<dbReference type="GO" id="GO:0004712">
    <property type="term" value="F:protein serine/threonine/tyrosine kinase activity"/>
    <property type="evidence" value="ECO:0007669"/>
    <property type="project" value="UniProtKB-UniRule"/>
</dbReference>
<dbReference type="GO" id="GO:0006109">
    <property type="term" value="P:regulation of carbohydrate metabolic process"/>
    <property type="evidence" value="ECO:0007669"/>
    <property type="project" value="UniProtKB-UniRule"/>
</dbReference>
<dbReference type="CDD" id="cd01918">
    <property type="entry name" value="HprK_C"/>
    <property type="match status" value="1"/>
</dbReference>
<dbReference type="FunFam" id="3.40.50.300:FF:000174">
    <property type="entry name" value="HPr kinase/phosphorylase"/>
    <property type="match status" value="1"/>
</dbReference>
<dbReference type="Gene3D" id="3.40.1390.20">
    <property type="entry name" value="HprK N-terminal domain-like"/>
    <property type="match status" value="1"/>
</dbReference>
<dbReference type="Gene3D" id="3.40.50.300">
    <property type="entry name" value="P-loop containing nucleotide triphosphate hydrolases"/>
    <property type="match status" value="1"/>
</dbReference>
<dbReference type="HAMAP" id="MF_01249">
    <property type="entry name" value="HPr_kinase"/>
    <property type="match status" value="1"/>
</dbReference>
<dbReference type="InterPro" id="IPR003755">
    <property type="entry name" value="HPr(Ser)_kin/Pase"/>
</dbReference>
<dbReference type="InterPro" id="IPR011104">
    <property type="entry name" value="Hpr_kin/Pase_C"/>
</dbReference>
<dbReference type="InterPro" id="IPR011126">
    <property type="entry name" value="Hpr_kin/Pase_Hpr_N"/>
</dbReference>
<dbReference type="InterPro" id="IPR027417">
    <property type="entry name" value="P-loop_NTPase"/>
</dbReference>
<dbReference type="InterPro" id="IPR028979">
    <property type="entry name" value="Ser_kin/Pase_Hpr-like_N_sf"/>
</dbReference>
<dbReference type="NCBIfam" id="TIGR00679">
    <property type="entry name" value="hpr-ser"/>
    <property type="match status" value="1"/>
</dbReference>
<dbReference type="PANTHER" id="PTHR30305:SF1">
    <property type="entry name" value="HPR KINASE_PHOSPHORYLASE"/>
    <property type="match status" value="1"/>
</dbReference>
<dbReference type="PANTHER" id="PTHR30305">
    <property type="entry name" value="PROTEIN YJDM-RELATED"/>
    <property type="match status" value="1"/>
</dbReference>
<dbReference type="Pfam" id="PF07475">
    <property type="entry name" value="Hpr_kinase_C"/>
    <property type="match status" value="1"/>
</dbReference>
<dbReference type="Pfam" id="PF02603">
    <property type="entry name" value="Hpr_kinase_N"/>
    <property type="match status" value="1"/>
</dbReference>
<dbReference type="SUPFAM" id="SSF75138">
    <property type="entry name" value="HprK N-terminal domain-like"/>
    <property type="match status" value="1"/>
</dbReference>
<dbReference type="SUPFAM" id="SSF53795">
    <property type="entry name" value="PEP carboxykinase-like"/>
    <property type="match status" value="1"/>
</dbReference>
<evidence type="ECO:0000255" key="1">
    <source>
        <dbReference type="HAMAP-Rule" id="MF_01249"/>
    </source>
</evidence>
<gene>
    <name evidence="1" type="primary">hprK</name>
    <name type="ordered locus">SPH_1544</name>
</gene>
<reference key="1">
    <citation type="journal article" date="2010" name="Genome Biol.">
        <title>Structure and dynamics of the pan-genome of Streptococcus pneumoniae and closely related species.</title>
        <authorList>
            <person name="Donati C."/>
            <person name="Hiller N.L."/>
            <person name="Tettelin H."/>
            <person name="Muzzi A."/>
            <person name="Croucher N.J."/>
            <person name="Angiuoli S.V."/>
            <person name="Oggioni M."/>
            <person name="Dunning Hotopp J.C."/>
            <person name="Hu F.Z."/>
            <person name="Riley D.R."/>
            <person name="Covacci A."/>
            <person name="Mitchell T.J."/>
            <person name="Bentley S.D."/>
            <person name="Kilian M."/>
            <person name="Ehrlich G.D."/>
            <person name="Rappuoli R."/>
            <person name="Moxon E.R."/>
            <person name="Masignani V."/>
        </authorList>
    </citation>
    <scope>NUCLEOTIDE SEQUENCE [LARGE SCALE GENOMIC DNA]</scope>
    <source>
        <strain>Hungary19A-6</strain>
    </source>
</reference>
<proteinExistence type="inferred from homology"/>
<organism>
    <name type="scientific">Streptococcus pneumoniae (strain Hungary19A-6)</name>
    <dbReference type="NCBI Taxonomy" id="487214"/>
    <lineage>
        <taxon>Bacteria</taxon>
        <taxon>Bacillati</taxon>
        <taxon>Bacillota</taxon>
        <taxon>Bacilli</taxon>
        <taxon>Lactobacillales</taxon>
        <taxon>Streptococcaceae</taxon>
        <taxon>Streptococcus</taxon>
    </lineage>
</organism>